<organism>
    <name type="scientific">Homo sapiens</name>
    <name type="common">Human</name>
    <dbReference type="NCBI Taxonomy" id="9606"/>
    <lineage>
        <taxon>Eukaryota</taxon>
        <taxon>Metazoa</taxon>
        <taxon>Chordata</taxon>
        <taxon>Craniata</taxon>
        <taxon>Vertebrata</taxon>
        <taxon>Euteleostomi</taxon>
        <taxon>Mammalia</taxon>
        <taxon>Eutheria</taxon>
        <taxon>Euarchontoglires</taxon>
        <taxon>Primates</taxon>
        <taxon>Haplorrhini</taxon>
        <taxon>Catarrhini</taxon>
        <taxon>Hominidae</taxon>
        <taxon>Homo</taxon>
    </lineage>
</organism>
<name>POMP_HUMAN</name>
<protein>
    <recommendedName>
        <fullName evidence="10">Proteasome maturation protein</fullName>
    </recommendedName>
    <alternativeName>
        <fullName>Proteassemblin</fullName>
    </alternativeName>
    <alternativeName>
        <fullName evidence="9">Protein UMP1 homolog</fullName>
        <shortName evidence="9">hUMP1</shortName>
    </alternativeName>
    <alternativeName>
        <fullName>Voltage-gated K channel beta subunit 4.1</fullName>
    </alternativeName>
</protein>
<proteinExistence type="evidence at protein level"/>
<accession>Q9Y244</accession>
<accession>A5HKJ2</accession>
<accession>D6MXU3</accession>
<accession>Q9HB69</accession>
<gene>
    <name evidence="11" type="primary">POMP</name>
    <name type="synonym">C13orf12</name>
    <name evidence="9" type="synonym">UMP1</name>
    <name type="ORF">HSPC014</name>
    <name type="ORF">HSPC036</name>
    <name type="ORF">PNAS-110</name>
</gene>
<feature type="chain" id="PRO_0000247184" description="Proteasome maturation protein">
    <location>
        <begin position="1"/>
        <end position="141"/>
    </location>
</feature>
<feature type="short sequence motif" description="High-affinity association with the preproteasome">
    <location>
        <begin position="68"/>
        <end position="72"/>
    </location>
</feature>
<feature type="cross-link" description="Glycyl lysine isopeptide (Lys-Gly) (interchain with G-Cter in SUMO2)" evidence="12">
    <location>
        <position position="39"/>
    </location>
</feature>
<feature type="turn" evidence="15">
    <location>
        <begin position="30"/>
        <end position="32"/>
    </location>
</feature>
<feature type="helix" evidence="15">
    <location>
        <begin position="38"/>
        <end position="42"/>
    </location>
</feature>
<feature type="helix" evidence="14">
    <location>
        <begin position="48"/>
        <end position="53"/>
    </location>
</feature>
<feature type="helix" evidence="14">
    <location>
        <begin position="55"/>
        <end position="70"/>
    </location>
</feature>
<feature type="helix" evidence="14">
    <location>
        <begin position="74"/>
        <end position="86"/>
    </location>
</feature>
<feature type="strand" evidence="16">
    <location>
        <begin position="88"/>
        <end position="90"/>
    </location>
</feature>
<feature type="strand" evidence="13">
    <location>
        <begin position="92"/>
        <end position="94"/>
    </location>
</feature>
<feature type="helix" evidence="14">
    <location>
        <begin position="100"/>
        <end position="106"/>
    </location>
</feature>
<feature type="turn" evidence="14">
    <location>
        <begin position="107"/>
        <end position="109"/>
    </location>
</feature>
<feature type="helix" evidence="14">
    <location>
        <begin position="114"/>
        <end position="117"/>
    </location>
</feature>
<feature type="helix" evidence="15">
    <location>
        <begin position="121"/>
        <end position="123"/>
    </location>
</feature>
<feature type="helix" evidence="14">
    <location>
        <begin position="130"/>
        <end position="137"/>
    </location>
</feature>
<keyword id="KW-0002">3D-structure</keyword>
<keyword id="KW-0143">Chaperone</keyword>
<keyword id="KW-0963">Cytoplasm</keyword>
<keyword id="KW-0903">Direct protein sequencing</keyword>
<keyword id="KW-0256">Endoplasmic reticulum</keyword>
<keyword id="KW-0977">Ichthyosis</keyword>
<keyword id="KW-1017">Isopeptide bond</keyword>
<keyword id="KW-0472">Membrane</keyword>
<keyword id="KW-0492">Microsome</keyword>
<keyword id="KW-0539">Nucleus</keyword>
<keyword id="KW-1007">Palmoplantar keratoderma</keyword>
<keyword id="KW-1267">Proteomics identification</keyword>
<keyword id="KW-1185">Reference proteome</keyword>
<keyword id="KW-0832">Ubl conjugation</keyword>
<comment type="function">
    <text evidence="3 4 5">Molecular chaperone essential for the assembly of standard proteasomes and immunoproteasomes. Degraded after completion of proteasome maturation. Mediates the association of 20S preproteasome with the endoplasmic reticulum.</text>
</comment>
<comment type="subunit">
    <text>Constituent of preproteasomes, but not of mature 20S proteasomes. Within the preproteasome, may directly interact with PSMB1/beta6, PSMB4/beta7, PSMB5/beta5, PSMB6/beta1 and PSMB9/beta1i. Interaction with PSMB8/beta5i has been observed in PubMed:10973495, but not in PubMed:10926487. Forms tetramers.</text>
</comment>
<comment type="interaction">
    <interactant intactId="EBI-696895">
        <id>Q9Y244</id>
    </interactant>
    <interactant intactId="EBI-2350461">
        <id>Q15777</id>
        <label>MPPED2</label>
    </interactant>
    <organismsDiffer>false</organismsDiffer>
    <experiments>3</experiments>
</comment>
<comment type="interaction">
    <interactant intactId="EBI-696895">
        <id>Q9Y244</id>
    </interactant>
    <interactant intactId="EBI-603272">
        <id>O14818</id>
        <label>PSMA7</label>
    </interactant>
    <organismsDiffer>false</organismsDiffer>
    <experiments>3</experiments>
</comment>
<comment type="interaction">
    <interactant intactId="EBI-696895">
        <id>Q9Y244</id>
    </interactant>
    <interactant intactId="EBI-372273">
        <id>P20618</id>
        <label>PSMB1</label>
    </interactant>
    <organismsDiffer>false</organismsDiffer>
    <experiments>6</experiments>
</comment>
<comment type="interaction">
    <interactant intactId="EBI-696895">
        <id>Q9Y244</id>
    </interactant>
    <interactant intactId="EBI-359335">
        <id>P49721</id>
        <label>PSMB2</label>
    </interactant>
    <organismsDiffer>false</organismsDiffer>
    <experiments>5</experiments>
</comment>
<comment type="interaction">
    <interactant intactId="EBI-696895">
        <id>Q9Y244</id>
    </interactant>
    <interactant intactId="EBI-603340">
        <id>P49720</id>
        <label>PSMB3</label>
    </interactant>
    <organismsDiffer>false</organismsDiffer>
    <experiments>7</experiments>
</comment>
<comment type="interaction">
    <interactant intactId="EBI-696895">
        <id>Q9Y244</id>
    </interactant>
    <interactant intactId="EBI-603350">
        <id>P28070</id>
        <label>PSMB4</label>
    </interactant>
    <organismsDiffer>false</organismsDiffer>
    <experiments>4</experiments>
</comment>
<comment type="interaction">
    <interactant intactId="EBI-696895">
        <id>Q9Y244</id>
    </interactant>
    <interactant intactId="EBI-357828">
        <id>P28074</id>
        <label>PSMB5</label>
    </interactant>
    <organismsDiffer>false</organismsDiffer>
    <experiments>4</experiments>
</comment>
<comment type="interaction">
    <interactant intactId="EBI-696895">
        <id>Q9Y244</id>
    </interactant>
    <interactant intactId="EBI-359288">
        <id>P28072</id>
        <label>PSMB6</label>
    </interactant>
    <organismsDiffer>false</organismsDiffer>
    <experiments>3</experiments>
</comment>
<comment type="interaction">
    <interactant intactId="EBI-696895">
        <id>Q9Y244</id>
    </interactant>
    <interactant intactId="EBI-603319">
        <id>Q99436</id>
        <label>PSMB7</label>
    </interactant>
    <organismsDiffer>false</organismsDiffer>
    <experiments>6</experiments>
</comment>
<comment type="interaction">
    <interactant intactId="EBI-696895">
        <id>Q9Y244</id>
    </interactant>
    <interactant intactId="EBI-603300">
        <id>P28065</id>
        <label>PSMB9</label>
    </interactant>
    <organismsDiffer>false</organismsDiffer>
    <experiments>6</experiments>
</comment>
<comment type="subcellular location">
    <subcellularLocation>
        <location>Cytoplasm</location>
        <location>Cytosol</location>
    </subcellularLocation>
    <subcellularLocation>
        <location>Nucleus</location>
    </subcellularLocation>
    <subcellularLocation>
        <location>Microsome membrane</location>
    </subcellularLocation>
</comment>
<comment type="tissue specificity">
    <text evidence="6">Strongly expressed from the basal layer to the granular layer of healthy epidermis, whereas in KLICK patients there is a gradual decrease of expression toward the granular layer.</text>
</comment>
<comment type="induction">
    <text evidence="1 2 3">By IFNG/IFN-gamma.</text>
</comment>
<comment type="disease" evidence="6">
    <disease id="DI-02805">
        <name>Keratosis linearis with ichthyosis congenita and sclerosing keratoderma</name>
        <acronym>KLICK</acronym>
        <description>A keratinizing disorder characterized by ichthyosis, palmoplantar keratoderma with constricting bands around fingers, flexural deformities of fingers and keratotic papules in a linear distribution on the flexural side of large joints. Histological examination of the skin of affected individuals shows hypertrophy and hyperplasia of the spinous, granular and horny epidermal layer.</description>
        <dbReference type="MIM" id="601952"/>
    </disease>
    <text>The disease is caused by variants affecting the gene represented in this entry.</text>
</comment>
<comment type="disease" evidence="7 8">
    <disease id="DI-05287">
        <name>Proteasome-associated autoinflammatory syndrome 2</name>
        <acronym>PRAAS2</acronym>
        <description>An autosomal dominant autoinflammatory disorder characterized by onset in early infancy and severe inflammatory neutrophilic dermatitis, autoimmunity, and variable immunodeficiency.</description>
        <dbReference type="MIM" id="618048"/>
    </disease>
    <text>The disease is caused by variants affecting the gene represented in this entry.</text>
</comment>
<comment type="similarity">
    <text evidence="10">Belongs to the POMP/UMP1 family.</text>
</comment>
<comment type="caution">
    <text evidence="10">Although this protein has been named voltage-gated K channel beta subunit 4.1 in Ref.1 and Ref.2, there is no evidence that it may play a role in ion transport.</text>
</comment>
<comment type="sequence caution" evidence="10">
    <conflict type="frameshift">
        <sequence resource="EMBL-CDS" id="AAG23819"/>
    </conflict>
</comment>
<evidence type="ECO:0000269" key="1">
    <source>
    </source>
</evidence>
<evidence type="ECO:0000269" key="2">
    <source>
    </source>
</evidence>
<evidence type="ECO:0000269" key="3">
    <source>
    </source>
</evidence>
<evidence type="ECO:0000269" key="4">
    <source>
    </source>
</evidence>
<evidence type="ECO:0000269" key="5">
    <source>
    </source>
</evidence>
<evidence type="ECO:0000269" key="6">
    <source>
    </source>
</evidence>
<evidence type="ECO:0000269" key="7">
    <source>
    </source>
</evidence>
<evidence type="ECO:0000269" key="8">
    <source>
    </source>
</evidence>
<evidence type="ECO:0000303" key="9">
    <source>
    </source>
</evidence>
<evidence type="ECO:0000305" key="10"/>
<evidence type="ECO:0000312" key="11">
    <source>
        <dbReference type="HGNC" id="HGNC:20330"/>
    </source>
</evidence>
<evidence type="ECO:0007744" key="12">
    <source>
    </source>
</evidence>
<evidence type="ECO:0007829" key="13">
    <source>
        <dbReference type="PDB" id="8QYJ"/>
    </source>
</evidence>
<evidence type="ECO:0007829" key="14">
    <source>
        <dbReference type="PDB" id="8QYL"/>
    </source>
</evidence>
<evidence type="ECO:0007829" key="15">
    <source>
        <dbReference type="PDB" id="8QYN"/>
    </source>
</evidence>
<evidence type="ECO:0007829" key="16">
    <source>
        <dbReference type="PDB" id="8TM4"/>
    </source>
</evidence>
<reference key="1">
    <citation type="submission" date="2000-05" db="EMBL/GenBank/DDBJ databases">
        <title>Identification of a novel Kv beta subunit.</title>
        <authorList>
            <person name="Desir G.V."/>
            <person name="Tian S."/>
        </authorList>
    </citation>
    <scope>NUCLEOTIDE SEQUENCE [MRNA]</scope>
    <source>
        <tissue>Heart</tissue>
    </source>
</reference>
<reference key="2">
    <citation type="submission" date="2007-04" db="EMBL/GenBank/DDBJ databases">
        <authorList>
            <person name="Thomas D."/>
            <person name="Sullivan A.N."/>
            <person name="Goldstein S.A."/>
        </authorList>
    </citation>
    <scope>NUCLEOTIDE SEQUENCE [MRNA]</scope>
    <source>
        <tissue>Heart</tissue>
    </source>
</reference>
<reference key="3">
    <citation type="journal article" date="2010" name="Am. J. Hum. Genet.">
        <title>A single-nucleotide deletion in the POMP 5' UTR causes a transcriptional switch and altered epidermal proteasome distribution in KLICK genodermatosis.</title>
        <authorList>
            <person name="Dahlqvist J."/>
            <person name="Klar J."/>
            <person name="Tiwari N."/>
            <person name="Schuster J."/>
            <person name="Torma H."/>
            <person name="Badhai J."/>
            <person name="Pujol R."/>
            <person name="van Steensel M.A."/>
            <person name="Brinkhuizen T."/>
            <person name="Gijezen L."/>
            <person name="Chaves A."/>
            <person name="Tadini G."/>
            <person name="Vahlquist A."/>
            <person name="Dahl N."/>
        </authorList>
    </citation>
    <scope>NUCLEOTIDE SEQUENCE [MRNA]</scope>
    <scope>INVOLVEMENT IN KLICK</scope>
    <scope>TISSUE SPECIFICITY</scope>
</reference>
<reference key="4">
    <citation type="submission" date="2000-06" db="EMBL/GenBank/DDBJ databases">
        <title>Human acute promyelocytic leukemia cell line NB4's apoptosis related genes.</title>
        <authorList>
            <person name="Yu W.-Q."/>
            <person name="Chai Y.-B."/>
            <person name="Sun B.-Z."/>
            <person name="Zhu F."/>
            <person name="Liu X.-S."/>
            <person name="Li Z."/>
            <person name="Lu F."/>
            <person name="Yan W."/>
            <person name="Yang H."/>
            <person name="Zhao Z.-L."/>
        </authorList>
    </citation>
    <scope>NUCLEOTIDE SEQUENCE [LARGE SCALE MRNA]</scope>
    <source>
        <tissue>Promyelocytic leukemia</tissue>
    </source>
</reference>
<reference key="5">
    <citation type="journal article" date="2000" name="Genome Res.">
        <title>Cloning and functional analysis of cDNAs with open reading frames for 300 previously undefined genes expressed in CD34+ hematopoietic stem/progenitor cells.</title>
        <authorList>
            <person name="Zhang Q.-H."/>
            <person name="Ye M."/>
            <person name="Wu X.-Y."/>
            <person name="Ren S.-X."/>
            <person name="Zhao M."/>
            <person name="Zhao C.-J."/>
            <person name="Fu G."/>
            <person name="Shen Y."/>
            <person name="Fan H.-Y."/>
            <person name="Lu G."/>
            <person name="Zhong M."/>
            <person name="Xu X.-R."/>
            <person name="Han Z.-G."/>
            <person name="Zhang J.-W."/>
            <person name="Tao J."/>
            <person name="Huang Q.-H."/>
            <person name="Zhou J."/>
            <person name="Hu G.-X."/>
            <person name="Gu J."/>
            <person name="Chen S.-J."/>
            <person name="Chen Z."/>
        </authorList>
    </citation>
    <scope>NUCLEOTIDE SEQUENCE [LARGE SCALE MRNA]</scope>
    <source>
        <tissue>Umbilical cord blood</tissue>
    </source>
</reference>
<reference key="6">
    <citation type="journal article" date="2004" name="Nat. Genet.">
        <title>Complete sequencing and characterization of 21,243 full-length human cDNAs.</title>
        <authorList>
            <person name="Ota T."/>
            <person name="Suzuki Y."/>
            <person name="Nishikawa T."/>
            <person name="Otsuki T."/>
            <person name="Sugiyama T."/>
            <person name="Irie R."/>
            <person name="Wakamatsu A."/>
            <person name="Hayashi K."/>
            <person name="Sato H."/>
            <person name="Nagai K."/>
            <person name="Kimura K."/>
            <person name="Makita H."/>
            <person name="Sekine M."/>
            <person name="Obayashi M."/>
            <person name="Nishi T."/>
            <person name="Shibahara T."/>
            <person name="Tanaka T."/>
            <person name="Ishii S."/>
            <person name="Yamamoto J."/>
            <person name="Saito K."/>
            <person name="Kawai Y."/>
            <person name="Isono Y."/>
            <person name="Nakamura Y."/>
            <person name="Nagahari K."/>
            <person name="Murakami K."/>
            <person name="Yasuda T."/>
            <person name="Iwayanagi T."/>
            <person name="Wagatsuma M."/>
            <person name="Shiratori A."/>
            <person name="Sudo H."/>
            <person name="Hosoiri T."/>
            <person name="Kaku Y."/>
            <person name="Kodaira H."/>
            <person name="Kondo H."/>
            <person name="Sugawara M."/>
            <person name="Takahashi M."/>
            <person name="Kanda K."/>
            <person name="Yokoi T."/>
            <person name="Furuya T."/>
            <person name="Kikkawa E."/>
            <person name="Omura Y."/>
            <person name="Abe K."/>
            <person name="Kamihara K."/>
            <person name="Katsuta N."/>
            <person name="Sato K."/>
            <person name="Tanikawa M."/>
            <person name="Yamazaki M."/>
            <person name="Ninomiya K."/>
            <person name="Ishibashi T."/>
            <person name="Yamashita H."/>
            <person name="Murakawa K."/>
            <person name="Fujimori K."/>
            <person name="Tanai H."/>
            <person name="Kimata M."/>
            <person name="Watanabe M."/>
            <person name="Hiraoka S."/>
            <person name="Chiba Y."/>
            <person name="Ishida S."/>
            <person name="Ono Y."/>
            <person name="Takiguchi S."/>
            <person name="Watanabe S."/>
            <person name="Yosida M."/>
            <person name="Hotuta T."/>
            <person name="Kusano J."/>
            <person name="Kanehori K."/>
            <person name="Takahashi-Fujii A."/>
            <person name="Hara H."/>
            <person name="Tanase T.-O."/>
            <person name="Nomura Y."/>
            <person name="Togiya S."/>
            <person name="Komai F."/>
            <person name="Hara R."/>
            <person name="Takeuchi K."/>
            <person name="Arita M."/>
            <person name="Imose N."/>
            <person name="Musashino K."/>
            <person name="Yuuki H."/>
            <person name="Oshima A."/>
            <person name="Sasaki N."/>
            <person name="Aotsuka S."/>
            <person name="Yoshikawa Y."/>
            <person name="Matsunawa H."/>
            <person name="Ichihara T."/>
            <person name="Shiohata N."/>
            <person name="Sano S."/>
            <person name="Moriya S."/>
            <person name="Momiyama H."/>
            <person name="Satoh N."/>
            <person name="Takami S."/>
            <person name="Terashima Y."/>
            <person name="Suzuki O."/>
            <person name="Nakagawa S."/>
            <person name="Senoh A."/>
            <person name="Mizoguchi H."/>
            <person name="Goto Y."/>
            <person name="Shimizu F."/>
            <person name="Wakebe H."/>
            <person name="Hishigaki H."/>
            <person name="Watanabe T."/>
            <person name="Sugiyama A."/>
            <person name="Takemoto M."/>
            <person name="Kawakami B."/>
            <person name="Yamazaki M."/>
            <person name="Watanabe K."/>
            <person name="Kumagai A."/>
            <person name="Itakura S."/>
            <person name="Fukuzumi Y."/>
            <person name="Fujimori Y."/>
            <person name="Komiyama M."/>
            <person name="Tashiro H."/>
            <person name="Tanigami A."/>
            <person name="Fujiwara T."/>
            <person name="Ono T."/>
            <person name="Yamada K."/>
            <person name="Fujii Y."/>
            <person name="Ozaki K."/>
            <person name="Hirao M."/>
            <person name="Ohmori Y."/>
            <person name="Kawabata A."/>
            <person name="Hikiji T."/>
            <person name="Kobatake N."/>
            <person name="Inagaki H."/>
            <person name="Ikema Y."/>
            <person name="Okamoto S."/>
            <person name="Okitani R."/>
            <person name="Kawakami T."/>
            <person name="Noguchi S."/>
            <person name="Itoh T."/>
            <person name="Shigeta K."/>
            <person name="Senba T."/>
            <person name="Matsumura K."/>
            <person name="Nakajima Y."/>
            <person name="Mizuno T."/>
            <person name="Morinaga M."/>
            <person name="Sasaki M."/>
            <person name="Togashi T."/>
            <person name="Oyama M."/>
            <person name="Hata H."/>
            <person name="Watanabe M."/>
            <person name="Komatsu T."/>
            <person name="Mizushima-Sugano J."/>
            <person name="Satoh T."/>
            <person name="Shirai Y."/>
            <person name="Takahashi Y."/>
            <person name="Nakagawa K."/>
            <person name="Okumura K."/>
            <person name="Nagase T."/>
            <person name="Nomura N."/>
            <person name="Kikuchi H."/>
            <person name="Masuho Y."/>
            <person name="Yamashita R."/>
            <person name="Nakai K."/>
            <person name="Yada T."/>
            <person name="Nakamura Y."/>
            <person name="Ohara O."/>
            <person name="Isogai T."/>
            <person name="Sugano S."/>
        </authorList>
    </citation>
    <scope>NUCLEOTIDE SEQUENCE [LARGE SCALE MRNA]</scope>
    <source>
        <tissue>Tongue</tissue>
    </source>
</reference>
<reference key="7">
    <citation type="journal article" date="2004" name="Nature">
        <title>The DNA sequence and analysis of human chromosome 13.</title>
        <authorList>
            <person name="Dunham A."/>
            <person name="Matthews L.H."/>
            <person name="Burton J."/>
            <person name="Ashurst J.L."/>
            <person name="Howe K.L."/>
            <person name="Ashcroft K.J."/>
            <person name="Beare D.M."/>
            <person name="Burford D.C."/>
            <person name="Hunt S.E."/>
            <person name="Griffiths-Jones S."/>
            <person name="Jones M.C."/>
            <person name="Keenan S.J."/>
            <person name="Oliver K."/>
            <person name="Scott C.E."/>
            <person name="Ainscough R."/>
            <person name="Almeida J.P."/>
            <person name="Ambrose K.D."/>
            <person name="Andrews D.T."/>
            <person name="Ashwell R.I.S."/>
            <person name="Babbage A.K."/>
            <person name="Bagguley C.L."/>
            <person name="Bailey J."/>
            <person name="Bannerjee R."/>
            <person name="Barlow K.F."/>
            <person name="Bates K."/>
            <person name="Beasley H."/>
            <person name="Bird C.P."/>
            <person name="Bray-Allen S."/>
            <person name="Brown A.J."/>
            <person name="Brown J.Y."/>
            <person name="Burrill W."/>
            <person name="Carder C."/>
            <person name="Carter N.P."/>
            <person name="Chapman J.C."/>
            <person name="Clamp M.E."/>
            <person name="Clark S.Y."/>
            <person name="Clarke G."/>
            <person name="Clee C.M."/>
            <person name="Clegg S.C."/>
            <person name="Cobley V."/>
            <person name="Collins J.E."/>
            <person name="Corby N."/>
            <person name="Coville G.J."/>
            <person name="Deloukas P."/>
            <person name="Dhami P."/>
            <person name="Dunham I."/>
            <person name="Dunn M."/>
            <person name="Earthrowl M.E."/>
            <person name="Ellington A.G."/>
            <person name="Faulkner L."/>
            <person name="Frankish A.G."/>
            <person name="Frankland J."/>
            <person name="French L."/>
            <person name="Garner P."/>
            <person name="Garnett J."/>
            <person name="Gilbert J.G.R."/>
            <person name="Gilson C.J."/>
            <person name="Ghori J."/>
            <person name="Grafham D.V."/>
            <person name="Gribble S.M."/>
            <person name="Griffiths C."/>
            <person name="Hall R.E."/>
            <person name="Hammond S."/>
            <person name="Harley J.L."/>
            <person name="Hart E.A."/>
            <person name="Heath P.D."/>
            <person name="Howden P.J."/>
            <person name="Huckle E.J."/>
            <person name="Hunt P.J."/>
            <person name="Hunt A.R."/>
            <person name="Johnson C."/>
            <person name="Johnson D."/>
            <person name="Kay M."/>
            <person name="Kimberley A.M."/>
            <person name="King A."/>
            <person name="Laird G.K."/>
            <person name="Langford C.J."/>
            <person name="Lawlor S."/>
            <person name="Leongamornlert D.A."/>
            <person name="Lloyd D.M."/>
            <person name="Lloyd C."/>
            <person name="Loveland J.E."/>
            <person name="Lovell J."/>
            <person name="Martin S."/>
            <person name="Mashreghi-Mohammadi M."/>
            <person name="McLaren S.J."/>
            <person name="McMurray A."/>
            <person name="Milne S."/>
            <person name="Moore M.J.F."/>
            <person name="Nickerson T."/>
            <person name="Palmer S.A."/>
            <person name="Pearce A.V."/>
            <person name="Peck A.I."/>
            <person name="Pelan S."/>
            <person name="Phillimore B."/>
            <person name="Porter K.M."/>
            <person name="Rice C.M."/>
            <person name="Searle S."/>
            <person name="Sehra H.K."/>
            <person name="Shownkeen R."/>
            <person name="Skuce C.D."/>
            <person name="Smith M."/>
            <person name="Steward C.A."/>
            <person name="Sycamore N."/>
            <person name="Tester J."/>
            <person name="Thomas D.W."/>
            <person name="Tracey A."/>
            <person name="Tromans A."/>
            <person name="Tubby B."/>
            <person name="Wall M."/>
            <person name="Wallis J.M."/>
            <person name="West A.P."/>
            <person name="Whitehead S.L."/>
            <person name="Willey D.L."/>
            <person name="Wilming L."/>
            <person name="Wray P.W."/>
            <person name="Wright M.W."/>
            <person name="Young L."/>
            <person name="Coulson A."/>
            <person name="Durbin R.M."/>
            <person name="Hubbard T."/>
            <person name="Sulston J.E."/>
            <person name="Beck S."/>
            <person name="Bentley D.R."/>
            <person name="Rogers J."/>
            <person name="Ross M.T."/>
        </authorList>
    </citation>
    <scope>NUCLEOTIDE SEQUENCE [LARGE SCALE GENOMIC DNA]</scope>
</reference>
<reference key="8">
    <citation type="submission" date="2005-07" db="EMBL/GenBank/DDBJ databases">
        <authorList>
            <person name="Mural R.J."/>
            <person name="Istrail S."/>
            <person name="Sutton G.G."/>
            <person name="Florea L."/>
            <person name="Halpern A.L."/>
            <person name="Mobarry C.M."/>
            <person name="Lippert R."/>
            <person name="Walenz B."/>
            <person name="Shatkay H."/>
            <person name="Dew I."/>
            <person name="Miller J.R."/>
            <person name="Flanigan M.J."/>
            <person name="Edwards N.J."/>
            <person name="Bolanos R."/>
            <person name="Fasulo D."/>
            <person name="Halldorsson B.V."/>
            <person name="Hannenhalli S."/>
            <person name="Turner R."/>
            <person name="Yooseph S."/>
            <person name="Lu F."/>
            <person name="Nusskern D.R."/>
            <person name="Shue B.C."/>
            <person name="Zheng X.H."/>
            <person name="Zhong F."/>
            <person name="Delcher A.L."/>
            <person name="Huson D.H."/>
            <person name="Kravitz S.A."/>
            <person name="Mouchard L."/>
            <person name="Reinert K."/>
            <person name="Remington K.A."/>
            <person name="Clark A.G."/>
            <person name="Waterman M.S."/>
            <person name="Eichler E.E."/>
            <person name="Adams M.D."/>
            <person name="Hunkapiller M.W."/>
            <person name="Myers E.W."/>
            <person name="Venter J.C."/>
        </authorList>
    </citation>
    <scope>NUCLEOTIDE SEQUENCE [LARGE SCALE GENOMIC DNA]</scope>
</reference>
<reference key="9">
    <citation type="journal article" date="2004" name="Genome Res.">
        <title>The status, quality, and expansion of the NIH full-length cDNA project: the Mammalian Gene Collection (MGC).</title>
        <authorList>
            <consortium name="The MGC Project Team"/>
        </authorList>
    </citation>
    <scope>NUCLEOTIDE SEQUENCE [LARGE SCALE MRNA]</scope>
    <source>
        <tissue>Bone marrow</tissue>
        <tissue>Placenta</tissue>
    </source>
</reference>
<reference key="10">
    <citation type="journal article" date="2000" name="J. Mol. Biol.">
        <title>Characterisation of the newly identified human Ump1 homologue POMP and analysis of LMP7(beta 5i) incorporation into 20 S proteasomes.</title>
        <authorList>
            <person name="Witt E."/>
            <person name="Zantopf D."/>
            <person name="Schmidt M."/>
            <person name="Kraft R."/>
            <person name="Kloetzel P.-M."/>
            <person name="Krueger E."/>
        </authorList>
    </citation>
    <scope>PROTEIN SEQUENCE OF 69-79 AND 93-106</scope>
    <scope>ASSOCIATION WITH PREPROTEASOME</scope>
    <scope>INDUCTION</scope>
</reference>
<reference key="11">
    <citation type="journal article" date="2000" name="Mol. Cell Biol. Res. Commun.">
        <title>Identification of proteassemblin, a mammalian homologue of the yeast protein, Ump1p, that is required for normal proteasome assembly.</title>
        <authorList>
            <person name="Griffin T.A."/>
            <person name="Slack J.P."/>
            <person name="McCluskey T.S."/>
            <person name="Monaco J.J."/>
            <person name="Colbert R.A."/>
        </authorList>
    </citation>
    <scope>ASSOCIATION WITH PREPROTEASOME</scope>
</reference>
<reference key="12">
    <citation type="journal article" date="2000" name="Proc. Natl. Acad. Sci. U.S.A.">
        <title>Identification and characterization of a mammalian protein interacting with 20S proteasome precursors.</title>
        <authorList>
            <person name="Burri L."/>
            <person name="Hoeckendorff J."/>
            <person name="Boehm U."/>
            <person name="Klamp T."/>
            <person name="Dohmen R.J."/>
            <person name="Levy F."/>
        </authorList>
    </citation>
    <scope>ASSOCIATION WITH PREPROTEASOME</scope>
    <scope>INDUCTION</scope>
</reference>
<reference key="13">
    <citation type="journal article" date="2004" name="Biochem. Biophys. Res. Commun.">
        <title>Protein-protein interactions among human 20S proteasome subunits and proteassemblin.</title>
        <authorList>
            <person name="Jayarapu K."/>
            <person name="Griffin T.A."/>
        </authorList>
    </citation>
    <scope>INTERACTION WITH PSMB1; PSMB4; PSMB5; PSMB6 AND PSMB9</scope>
</reference>
<reference key="14">
    <citation type="journal article" date="2005" name="Nature">
        <title>A heterodimeric complex that promotes the assembly of mammalian 20S proteasomes.</title>
        <authorList>
            <person name="Hirano Y."/>
            <person name="Hendil K.B."/>
            <person name="Yashiroda H."/>
            <person name="Iemura S."/>
            <person name="Nagane R."/>
            <person name="Hioki Y."/>
            <person name="Natsume T."/>
            <person name="Tanaka K."/>
            <person name="Murata S."/>
        </authorList>
    </citation>
    <scope>FUNCTION</scope>
</reference>
<reference key="15">
    <citation type="journal article" date="2005" name="Proc. Natl. Acad. Sci. U.S.A.">
        <title>IFN-gamma-induced immune adaptation of the proteasome system is an accelerated and transient response.</title>
        <authorList>
            <person name="Heink S."/>
            <person name="Ludwig D."/>
            <person name="Kloetzel P.-M."/>
            <person name="Krueger E."/>
        </authorList>
    </citation>
    <scope>FUNCTION</scope>
    <scope>INDUCTION</scope>
    <scope>INTERACTION WITH PSMB5 AND PSMB8</scope>
</reference>
<reference key="16">
    <citation type="journal article" date="2006" name="Int. J. Biol. Macromol.">
        <title>Possible tetramerisation of the proteasome maturation factor POMP/proteassemblin/hUmp1 and its subcellular localisation.</title>
        <authorList>
            <person name="Hoefer M.M."/>
            <person name="Boneberg E.-M."/>
            <person name="Grotegut S."/>
            <person name="Kusch J."/>
            <person name="Illges H."/>
        </authorList>
    </citation>
    <scope>TETRAMERIZATION</scope>
    <scope>SUBCELLULAR LOCATION</scope>
</reference>
<reference key="17">
    <citation type="journal article" date="2007" name="EMBO Rep.">
        <title>The proteasome maturation protein POMP facilitates major steps of 20S proteasome formation at the endoplasmic reticulum.</title>
        <authorList>
            <person name="Fricke B."/>
            <person name="Heink S."/>
            <person name="Steffen J."/>
            <person name="Kloetzel P.M."/>
            <person name="Kruger E."/>
        </authorList>
    </citation>
    <scope>FUNCTION</scope>
    <scope>SUBCELLULAR LOCATION</scope>
</reference>
<reference key="18">
    <citation type="journal article" date="2011" name="BMC Syst. Biol.">
        <title>Initial characterization of the human central proteome.</title>
        <authorList>
            <person name="Burkard T.R."/>
            <person name="Planyavsky M."/>
            <person name="Kaupe I."/>
            <person name="Breitwieser F.P."/>
            <person name="Buerckstuemmer T."/>
            <person name="Bennett K.L."/>
            <person name="Superti-Furga G."/>
            <person name="Colinge J."/>
        </authorList>
    </citation>
    <scope>IDENTIFICATION BY MASS SPECTROMETRY [LARGE SCALE ANALYSIS]</scope>
</reference>
<reference key="19">
    <citation type="journal article" date="2013" name="Annu. Rev. Biochem.">
        <title>Molecular architecture and assembly of the eukaryotic proteasome.</title>
        <authorList>
            <person name="Tomko R.J. Jr."/>
            <person name="Hochstrasser M."/>
        </authorList>
    </citation>
    <scope>NOMENCLATURE</scope>
</reference>
<reference key="20">
    <citation type="journal article" date="2015" name="J. Clin. Invest.">
        <title>Additive loss-of-function proteasome subunit mutations in CANDLE/PRAAS patients promote type I IFN production.</title>
        <authorList>
            <person name="Brehm A."/>
            <person name="Liu Y."/>
            <person name="Sheikh A."/>
            <person name="Marrero B."/>
            <person name="Omoyinmi E."/>
            <person name="Zhou Q."/>
            <person name="Montealegre G."/>
            <person name="Biancotto A."/>
            <person name="Reinhardt A."/>
            <person name="Almeida de Jesus A."/>
            <person name="Pelletier M."/>
            <person name="Tsai W.L."/>
            <person name="Remmers E.F."/>
            <person name="Kardava L."/>
            <person name="Hill S."/>
            <person name="Kim H."/>
            <person name="Lachmann H.J."/>
            <person name="Megarbane A."/>
            <person name="Chae J.J."/>
            <person name="Brady J."/>
            <person name="Castillo R.D."/>
            <person name="Brown D."/>
            <person name="Casano A.V."/>
            <person name="Gao L."/>
            <person name="Chapelle D."/>
            <person name="Huang Y."/>
            <person name="Stone D."/>
            <person name="Chen Y."/>
            <person name="Sotzny F."/>
            <person name="Lee C.C."/>
            <person name="Kastner D.L."/>
            <person name="Torrelo A."/>
            <person name="Zlotogorski A."/>
            <person name="Moir S."/>
            <person name="Gadina M."/>
            <person name="McCoy P."/>
            <person name="Wesley R."/>
            <person name="Rother K.I."/>
            <person name="Hildebrand P.W."/>
            <person name="Brogan P."/>
            <person name="Krueger E."/>
            <person name="Aksentijevich I."/>
            <person name="Goldbach-Mansky R."/>
        </authorList>
    </citation>
    <scope>INVOLVEMENT IN PRAAS2</scope>
</reference>
<reference key="21">
    <citation type="journal article" date="2016" name="J. Clin. Invest.">
        <authorList>
            <person name="Brehm A."/>
            <person name="Liu Y."/>
            <person name="Sheikh A."/>
            <person name="Marrero B."/>
            <person name="Omoyinmi E."/>
            <person name="Zhou Q."/>
            <person name="Montealegre G."/>
            <person name="Biancotto A."/>
            <person name="Reinhardt A."/>
            <person name="de Jesus A.A."/>
            <person name="Pelletier M."/>
            <person name="Tsai W.L."/>
            <person name="Remmers E.F."/>
            <person name="Kardava L."/>
            <person name="Hill S."/>
            <person name="Kim H."/>
            <person name="Lachmann H.J."/>
            <person name="Megarbane A."/>
            <person name="Chae J.J."/>
            <person name="Brady J."/>
            <person name="Castillo R.D."/>
            <person name="Brown D."/>
            <person name="Casano A.V."/>
            <person name="Gao L."/>
            <person name="Chapelle D."/>
            <person name="Huang Y."/>
            <person name="Stone D."/>
            <person name="Chen Y."/>
            <person name="Sotzny F."/>
            <person name="Lee C.C."/>
            <person name="Kastner D.L."/>
            <person name="Torrelo A."/>
            <person name="Zlotogorski A."/>
            <person name="Moir S."/>
            <person name="Gadina M."/>
            <person name="McCoy P."/>
            <person name="Wesley R."/>
            <person name="Rother K.I."/>
            <person name="Hildebrand P.W."/>
            <person name="Brogan P."/>
            <person name="Krueger E."/>
            <person name="Aksentijevich I."/>
            <person name="Goldbach-Mansky R."/>
        </authorList>
    </citation>
    <scope>ERRATUM OF PUBMED:26524591</scope>
</reference>
<reference key="22">
    <citation type="journal article" date="2017" name="Nat. Struct. Mol. Biol.">
        <title>Site-specific mapping of the human SUMO proteome reveals co-modification with phosphorylation.</title>
        <authorList>
            <person name="Hendriks I.A."/>
            <person name="Lyon D."/>
            <person name="Young C."/>
            <person name="Jensen L.J."/>
            <person name="Vertegaal A.C."/>
            <person name="Nielsen M.L."/>
        </authorList>
    </citation>
    <scope>SUMOYLATION [LARGE SCALE ANALYSIS] AT LYS-39</scope>
    <scope>IDENTIFICATION BY MASS SPECTROMETRY [LARGE SCALE ANALYSIS]</scope>
</reference>
<reference key="23">
    <citation type="journal article" date="2018" name="Am. J. Hum. Genet.">
        <title>Heterozygous truncating variants in POMP escape nonsense-mediated decay and cause a nique immune dysregulatory syndrome.</title>
        <authorList>
            <consortium name="Undiagnosed Diseases Network members"/>
            <person name="Poli M.C."/>
            <person name="Ebstein F."/>
            <person name="Nicholas S.K."/>
            <person name="de Guzman M.M."/>
            <person name="Forbes L.R."/>
            <person name="Chinn I.K."/>
            <person name="Mace E.M."/>
            <person name="Vogel T.P."/>
            <person name="Carisey A.F."/>
            <person name="Benavides F."/>
            <person name="Coban-Akdemir Z.H."/>
            <person name="Gibbs R.A."/>
            <person name="Jhangiani S.N."/>
            <person name="Muzny D.M."/>
            <person name="Carvalho C.M.B."/>
            <person name="Schady D.A."/>
            <person name="Jain M."/>
            <person name="Rosenfeld J.A."/>
            <person name="Emrick L."/>
            <person name="Lewis R.A."/>
            <person name="Lee B."/>
            <person name="Zieba B.A."/>
            <person name="Kuery S."/>
            <person name="Krueger E."/>
            <person name="Lupski J.R."/>
            <person name="Bostwick B.L."/>
            <person name="Orange J.S."/>
        </authorList>
    </citation>
    <scope>INVOLVEMENT IN PRAAS2</scope>
</reference>
<dbReference type="EMBL" id="AF262975">
    <property type="protein sequence ID" value="AAK58521.1"/>
    <property type="molecule type" value="mRNA"/>
</dbReference>
<dbReference type="EMBL" id="EF535527">
    <property type="protein sequence ID" value="ABQ08566.1"/>
    <property type="molecule type" value="mRNA"/>
</dbReference>
<dbReference type="EMBL" id="GU045555">
    <property type="protein sequence ID" value="ADE92939.1"/>
    <property type="molecule type" value="mRNA"/>
</dbReference>
<dbReference type="EMBL" id="GU045556">
    <property type="protein sequence ID" value="ADE92940.1"/>
    <property type="molecule type" value="mRNA"/>
</dbReference>
<dbReference type="EMBL" id="AF275807">
    <property type="protein sequence ID" value="AAG23819.1"/>
    <property type="status" value="ALT_FRAME"/>
    <property type="molecule type" value="mRNA"/>
</dbReference>
<dbReference type="EMBL" id="AF077200">
    <property type="protein sequence ID" value="AAD26995.1"/>
    <property type="molecule type" value="mRNA"/>
</dbReference>
<dbReference type="EMBL" id="AF125097">
    <property type="protein sequence ID" value="AAD39914.1"/>
    <property type="molecule type" value="mRNA"/>
</dbReference>
<dbReference type="EMBL" id="AK312118">
    <property type="protein sequence ID" value="BAG35054.1"/>
    <property type="molecule type" value="mRNA"/>
</dbReference>
<dbReference type="EMBL" id="AL359454">
    <property type="status" value="NOT_ANNOTATED_CDS"/>
    <property type="molecule type" value="Genomic_DNA"/>
</dbReference>
<dbReference type="EMBL" id="CH471075">
    <property type="protein sequence ID" value="EAX08435.1"/>
    <property type="molecule type" value="Genomic_DNA"/>
</dbReference>
<dbReference type="EMBL" id="BC014334">
    <property type="protein sequence ID" value="AAH14334.1"/>
    <property type="molecule type" value="mRNA"/>
</dbReference>
<dbReference type="EMBL" id="BC003390">
    <property type="protein sequence ID" value="AAH03390.1"/>
    <property type="molecule type" value="mRNA"/>
</dbReference>
<dbReference type="CCDS" id="CCDS9331.1"/>
<dbReference type="RefSeq" id="NP_057016.1">
    <property type="nucleotide sequence ID" value="NM_015932.6"/>
</dbReference>
<dbReference type="PDB" id="8QYJ">
    <property type="method" value="EM"/>
    <property type="resolution" value="2.73 A"/>
    <property type="chains" value="H=1-141"/>
</dbReference>
<dbReference type="PDB" id="8QYL">
    <property type="method" value="EM"/>
    <property type="resolution" value="2.67 A"/>
    <property type="chains" value="H=1-141"/>
</dbReference>
<dbReference type="PDB" id="8QYM">
    <property type="method" value="EM"/>
    <property type="resolution" value="2.73 A"/>
    <property type="chains" value="H=1-141"/>
</dbReference>
<dbReference type="PDB" id="8QYN">
    <property type="method" value="EM"/>
    <property type="resolution" value="2.88 A"/>
    <property type="chains" value="H=1-141"/>
</dbReference>
<dbReference type="PDB" id="8QYS">
    <property type="method" value="EM"/>
    <property type="resolution" value="3.89 A"/>
    <property type="chains" value="H/Y=1-141"/>
</dbReference>
<dbReference type="PDB" id="8QZ9">
    <property type="method" value="EM"/>
    <property type="resolution" value="2.95 A"/>
    <property type="chains" value="H=1-141"/>
</dbReference>
<dbReference type="PDB" id="8TM4">
    <property type="method" value="EM"/>
    <property type="resolution" value="3.00 A"/>
    <property type="chains" value="e=1-141"/>
</dbReference>
<dbReference type="PDB" id="8TM5">
    <property type="method" value="EM"/>
    <property type="resolution" value="3.00 A"/>
    <property type="chains" value="e=1-141"/>
</dbReference>
<dbReference type="PDB" id="8TM6">
    <property type="method" value="EM"/>
    <property type="resolution" value="2.80 A"/>
    <property type="chains" value="e/h=1-141"/>
</dbReference>
<dbReference type="PDB" id="8YIX">
    <property type="method" value="EM"/>
    <property type="resolution" value="2.91 A"/>
    <property type="chains" value="h=1-141"/>
</dbReference>
<dbReference type="PDB" id="8YIY">
    <property type="method" value="EM"/>
    <property type="resolution" value="3.41 A"/>
    <property type="chains" value="e/h=1-141"/>
</dbReference>
<dbReference type="PDBsum" id="8QYJ"/>
<dbReference type="PDBsum" id="8QYL"/>
<dbReference type="PDBsum" id="8QYM"/>
<dbReference type="PDBsum" id="8QYN"/>
<dbReference type="PDBsum" id="8QYS"/>
<dbReference type="PDBsum" id="8QZ9"/>
<dbReference type="PDBsum" id="8TM4"/>
<dbReference type="PDBsum" id="8TM5"/>
<dbReference type="PDBsum" id="8TM6"/>
<dbReference type="PDBsum" id="8YIX"/>
<dbReference type="PDBsum" id="8YIY"/>
<dbReference type="EMDB" id="EMD-18755"/>
<dbReference type="EMDB" id="EMD-18757"/>
<dbReference type="EMDB" id="EMD-18758"/>
<dbReference type="EMDB" id="EMD-18759"/>
<dbReference type="EMDB" id="EMD-18761"/>
<dbReference type="EMDB" id="EMD-18773"/>
<dbReference type="EMDB" id="EMD-39332"/>
<dbReference type="EMDB" id="EMD-39333"/>
<dbReference type="EMDB" id="EMD-41378"/>
<dbReference type="EMDB" id="EMD-41379"/>
<dbReference type="EMDB" id="EMD-41380"/>
<dbReference type="SMR" id="Q9Y244"/>
<dbReference type="BioGRID" id="119504">
    <property type="interactions" value="70"/>
</dbReference>
<dbReference type="CORUM" id="Q9Y244"/>
<dbReference type="FunCoup" id="Q9Y244">
    <property type="interactions" value="2901"/>
</dbReference>
<dbReference type="IntAct" id="Q9Y244">
    <property type="interactions" value="62"/>
</dbReference>
<dbReference type="MINT" id="Q9Y244"/>
<dbReference type="STRING" id="9606.ENSP00000370222"/>
<dbReference type="GlyGen" id="Q9Y244">
    <property type="glycosylation" value="1 site, 1 N-linked glycan (1 site)"/>
</dbReference>
<dbReference type="iPTMnet" id="Q9Y244"/>
<dbReference type="PhosphoSitePlus" id="Q9Y244"/>
<dbReference type="BioMuta" id="POMP"/>
<dbReference type="DMDM" id="74753466"/>
<dbReference type="jPOST" id="Q9Y244"/>
<dbReference type="MassIVE" id="Q9Y244"/>
<dbReference type="PaxDb" id="9606-ENSP00000370222"/>
<dbReference type="PeptideAtlas" id="Q9Y244"/>
<dbReference type="ProteomicsDB" id="85643"/>
<dbReference type="Pumba" id="Q9Y244"/>
<dbReference type="TopDownProteomics" id="Q9Y244"/>
<dbReference type="Antibodypedia" id="7516">
    <property type="antibodies" value="120 antibodies from 27 providers"/>
</dbReference>
<dbReference type="DNASU" id="51371"/>
<dbReference type="Ensembl" id="ENST00000380842.5">
    <property type="protein sequence ID" value="ENSP00000370222.4"/>
    <property type="gene ID" value="ENSG00000132963.9"/>
</dbReference>
<dbReference type="GeneID" id="51371"/>
<dbReference type="KEGG" id="hsa:51371"/>
<dbReference type="MANE-Select" id="ENST00000380842.5">
    <property type="protein sequence ID" value="ENSP00000370222.4"/>
    <property type="RefSeq nucleotide sequence ID" value="NM_015932.6"/>
    <property type="RefSeq protein sequence ID" value="NP_057016.1"/>
</dbReference>
<dbReference type="UCSC" id="uc001usf.4">
    <property type="organism name" value="human"/>
</dbReference>
<dbReference type="AGR" id="HGNC:20330"/>
<dbReference type="CTD" id="51371"/>
<dbReference type="DisGeNET" id="51371"/>
<dbReference type="GeneCards" id="POMP"/>
<dbReference type="HGNC" id="HGNC:20330">
    <property type="gene designation" value="POMP"/>
</dbReference>
<dbReference type="HPA" id="ENSG00000132963">
    <property type="expression patterns" value="Low tissue specificity"/>
</dbReference>
<dbReference type="MalaCards" id="POMP"/>
<dbReference type="MIM" id="601952">
    <property type="type" value="phenotype"/>
</dbReference>
<dbReference type="MIM" id="613386">
    <property type="type" value="gene"/>
</dbReference>
<dbReference type="MIM" id="618048">
    <property type="type" value="phenotype"/>
</dbReference>
<dbReference type="neXtProt" id="NX_Q9Y244"/>
<dbReference type="OpenTargets" id="ENSG00000132963"/>
<dbReference type="Orphanet" id="281201">
    <property type="disease" value="Keratosis linearis-ichthyosis congenita-sclerosing keratoderma syndrome"/>
</dbReference>
<dbReference type="PharmGKB" id="PA134898606"/>
<dbReference type="VEuPathDB" id="HostDB:ENSG00000132963"/>
<dbReference type="eggNOG" id="KOG3061">
    <property type="taxonomic scope" value="Eukaryota"/>
</dbReference>
<dbReference type="GeneTree" id="ENSGT00390000010734"/>
<dbReference type="HOGENOM" id="CLU_100687_3_0_1"/>
<dbReference type="InParanoid" id="Q9Y244"/>
<dbReference type="OMA" id="HADMEKK"/>
<dbReference type="OrthoDB" id="15001at2759"/>
<dbReference type="PAN-GO" id="Q9Y244">
    <property type="GO annotations" value="3 GO annotations based on evolutionary models"/>
</dbReference>
<dbReference type="PhylomeDB" id="Q9Y244"/>
<dbReference type="TreeFam" id="TF323548"/>
<dbReference type="PathwayCommons" id="Q9Y244"/>
<dbReference type="Reactome" id="R-HSA-9907900">
    <property type="pathway name" value="Proteasome assembly"/>
</dbReference>
<dbReference type="SignaLink" id="Q9Y244"/>
<dbReference type="BioGRID-ORCS" id="51371">
    <property type="hits" value="380 hits in 1124 CRISPR screens"/>
</dbReference>
<dbReference type="ChiTaRS" id="POMP">
    <property type="organism name" value="human"/>
</dbReference>
<dbReference type="GeneWiki" id="POMP"/>
<dbReference type="GenomeRNAi" id="51371"/>
<dbReference type="Pharos" id="Q9Y244">
    <property type="development level" value="Tbio"/>
</dbReference>
<dbReference type="PRO" id="PR:Q9Y244"/>
<dbReference type="Proteomes" id="UP000005640">
    <property type="component" value="Chromosome 13"/>
</dbReference>
<dbReference type="RNAct" id="Q9Y244">
    <property type="molecule type" value="protein"/>
</dbReference>
<dbReference type="Bgee" id="ENSG00000132963">
    <property type="expression patterns" value="Expressed in heart right ventricle and 214 other cell types or tissues"/>
</dbReference>
<dbReference type="ExpressionAtlas" id="Q9Y244">
    <property type="expression patterns" value="baseline and differential"/>
</dbReference>
<dbReference type="GO" id="GO:0005737">
    <property type="term" value="C:cytoplasm"/>
    <property type="evidence" value="ECO:0000318"/>
    <property type="project" value="GO_Central"/>
</dbReference>
<dbReference type="GO" id="GO:0005829">
    <property type="term" value="C:cytosol"/>
    <property type="evidence" value="ECO:0000304"/>
    <property type="project" value="Reactome"/>
</dbReference>
<dbReference type="GO" id="GO:0005783">
    <property type="term" value="C:endoplasmic reticulum"/>
    <property type="evidence" value="ECO:0007669"/>
    <property type="project" value="UniProtKB-KW"/>
</dbReference>
<dbReference type="GO" id="GO:0016020">
    <property type="term" value="C:membrane"/>
    <property type="evidence" value="ECO:0007669"/>
    <property type="project" value="UniProtKB-KW"/>
</dbReference>
<dbReference type="GO" id="GO:0016607">
    <property type="term" value="C:nuclear speck"/>
    <property type="evidence" value="ECO:0000314"/>
    <property type="project" value="HPA"/>
</dbReference>
<dbReference type="GO" id="GO:0005634">
    <property type="term" value="C:nucleus"/>
    <property type="evidence" value="ECO:0000318"/>
    <property type="project" value="GO_Central"/>
</dbReference>
<dbReference type="GO" id="GO:0043248">
    <property type="term" value="P:proteasome assembly"/>
    <property type="evidence" value="ECO:0000315"/>
    <property type="project" value="UniProtKB"/>
</dbReference>
<dbReference type="InterPro" id="IPR008012">
    <property type="entry name" value="Ump1"/>
</dbReference>
<dbReference type="PANTHER" id="PTHR12828:SF3">
    <property type="entry name" value="PROTEASOME MATURATION PROTEIN"/>
    <property type="match status" value="1"/>
</dbReference>
<dbReference type="PANTHER" id="PTHR12828">
    <property type="entry name" value="PROTEASOME MATURATION PROTEIN UMP1"/>
    <property type="match status" value="1"/>
</dbReference>
<dbReference type="Pfam" id="PF05348">
    <property type="entry name" value="UMP1"/>
    <property type="match status" value="1"/>
</dbReference>
<sequence>MNARGLGSELKDSIPVTELSASGPFESHDLLRKGFSCVKNELLPSHPLELSEKNFQLNQDKMNFSTLRNIQGLFAPLKLQMEFKAVQQVQRLPFLSSSNLSLDVLRGNDETIGFEDILNDPSQSEVMGEPHLMVEYKLGLL</sequence>